<name>NLEB1_ECO27</name>
<proteinExistence type="evidence at protein level"/>
<sequence>MLSSLNVLQSSFRGKTALSNSTLLQKVSFAGKEYSLEPIDERTPILFQWFEARPERYEKGEVPILNTKEHPYLSNIINAAKIENERIIGVLVDGNFTYEQKKEFLNLENEHQNIKIIYRADVDFSMYDKKLSDIYLENIHKQESYPASERDNYLLGLLREELKNIPEGKDSLIESYAEKREHTWFDFFRNLAILKAGSLFTETGKTGCHNISPCSGCIYLDADMIITDKLGVLYAPDGIAVHVDCNDEIKSLENGAIVVNRSNHPALLAGLDIMKSKVDAHPYYDGLGKGIKRHFNYSSLHNYNAFCDFIEFKHENIIPNTSMYTSSSW</sequence>
<dbReference type="EC" id="2.4.1.-" evidence="5 6 7 10 11 12 14"/>
<dbReference type="EMBL" id="FM180568">
    <property type="protein sequence ID" value="CAS10779.1"/>
    <property type="molecule type" value="Genomic_DNA"/>
</dbReference>
<dbReference type="RefSeq" id="WP_012578998.1">
    <property type="nucleotide sequence ID" value="NC_011601.1"/>
</dbReference>
<dbReference type="PDB" id="6ACI">
    <property type="method" value="X-ray"/>
    <property type="resolution" value="1.87 A"/>
    <property type="chains" value="A=28-329"/>
</dbReference>
<dbReference type="PDB" id="6E66">
    <property type="method" value="X-ray"/>
    <property type="resolution" value="2.10 A"/>
    <property type="chains" value="A=1-329"/>
</dbReference>
<dbReference type="PDBsum" id="6ACI"/>
<dbReference type="PDBsum" id="6E66"/>
<dbReference type="SMR" id="B7UI21"/>
<dbReference type="DIP" id="DIP-60511N"/>
<dbReference type="IntAct" id="B7UI21">
    <property type="interactions" value="3"/>
</dbReference>
<dbReference type="GlyCosmos" id="B7UI21">
    <property type="glycosylation" value="4 sites, No reported glycans"/>
</dbReference>
<dbReference type="KEGG" id="ecg:E2348C_3231"/>
<dbReference type="HOGENOM" id="CLU_081850_0_0_6"/>
<dbReference type="Proteomes" id="UP000008205">
    <property type="component" value="Chromosome"/>
</dbReference>
<dbReference type="GO" id="GO:0005576">
    <property type="term" value="C:extracellular region"/>
    <property type="evidence" value="ECO:0007669"/>
    <property type="project" value="UniProtKB-SubCell"/>
</dbReference>
<dbReference type="GO" id="GO:0030430">
    <property type="term" value="C:host cell cytoplasm"/>
    <property type="evidence" value="ECO:0000314"/>
    <property type="project" value="UniProtKB"/>
</dbReference>
<dbReference type="GO" id="GO:0030145">
    <property type="term" value="F:manganese ion binding"/>
    <property type="evidence" value="ECO:0000314"/>
    <property type="project" value="UniProtKB"/>
</dbReference>
<dbReference type="GO" id="GO:0106362">
    <property type="term" value="F:protein-arginine N-acetylglucosaminyltransferase activity"/>
    <property type="evidence" value="ECO:0000314"/>
    <property type="project" value="UniProtKB"/>
</dbReference>
<dbReference type="GO" id="GO:0090729">
    <property type="term" value="F:toxin activity"/>
    <property type="evidence" value="ECO:0000314"/>
    <property type="project" value="UniProtKB"/>
</dbReference>
<dbReference type="GO" id="GO:0085034">
    <property type="term" value="P:symbiont-mediated suppression of host NF-kappaB cascade"/>
    <property type="evidence" value="ECO:0000314"/>
    <property type="project" value="UniProtKB"/>
</dbReference>
<dbReference type="GO" id="GO:0052041">
    <property type="term" value="P:symbiont-mediated suppression of host programmed cell death"/>
    <property type="evidence" value="ECO:0000314"/>
    <property type="project" value="UniProtKB"/>
</dbReference>
<dbReference type="NCBIfam" id="NF011909">
    <property type="entry name" value="PRK15382.1"/>
    <property type="match status" value="1"/>
</dbReference>
<dbReference type="Pfam" id="PF24688">
    <property type="entry name" value="SseK_NleB"/>
    <property type="match status" value="1"/>
</dbReference>
<keyword id="KW-0002">3D-structure</keyword>
<keyword id="KW-0325">Glycoprotein</keyword>
<keyword id="KW-0328">Glycosyltransferase</keyword>
<keyword id="KW-1035">Host cytoplasm</keyword>
<keyword id="KW-0464">Manganese</keyword>
<keyword id="KW-0479">Metal-binding</keyword>
<keyword id="KW-1185">Reference proteome</keyword>
<keyword id="KW-0964">Secreted</keyword>
<keyword id="KW-0800">Toxin</keyword>
<keyword id="KW-0808">Transferase</keyword>
<keyword id="KW-0843">Virulence</keyword>
<evidence type="ECO:0000250" key="1">
    <source>
        <dbReference type="UniProtKB" id="A0A482PDI9"/>
    </source>
</evidence>
<evidence type="ECO:0000269" key="2">
    <source>
    </source>
</evidence>
<evidence type="ECO:0000269" key="3">
    <source>
    </source>
</evidence>
<evidence type="ECO:0000269" key="4">
    <source>
    </source>
</evidence>
<evidence type="ECO:0000269" key="5">
    <source>
    </source>
</evidence>
<evidence type="ECO:0000269" key="6">
    <source>
    </source>
</evidence>
<evidence type="ECO:0000269" key="7">
    <source>
    </source>
</evidence>
<evidence type="ECO:0000269" key="8">
    <source>
    </source>
</evidence>
<evidence type="ECO:0000269" key="9">
    <source>
    </source>
</evidence>
<evidence type="ECO:0000269" key="10">
    <source>
    </source>
</evidence>
<evidence type="ECO:0000269" key="11">
    <source>
    </source>
</evidence>
<evidence type="ECO:0000269" key="12">
    <source>
    </source>
</evidence>
<evidence type="ECO:0000269" key="13">
    <source>
    </source>
</evidence>
<evidence type="ECO:0000269" key="14">
    <source>
    </source>
</evidence>
<evidence type="ECO:0000303" key="15">
    <source>
    </source>
</evidence>
<evidence type="ECO:0000303" key="16">
    <source>
    </source>
</evidence>
<evidence type="ECO:0000303" key="17">
    <source>
    </source>
</evidence>
<evidence type="ECO:0000303" key="18">
    <source>
    </source>
</evidence>
<evidence type="ECO:0000305" key="19"/>
<evidence type="ECO:0000305" key="20">
    <source>
    </source>
</evidence>
<evidence type="ECO:0000312" key="21">
    <source>
        <dbReference type="EMBL" id="CAS10779.1"/>
    </source>
</evidence>
<evidence type="ECO:0007744" key="22">
    <source>
        <dbReference type="PDB" id="6ACI"/>
    </source>
</evidence>
<evidence type="ECO:0007744" key="23">
    <source>
        <dbReference type="PDB" id="6E66"/>
    </source>
</evidence>
<evidence type="ECO:0007829" key="24">
    <source>
        <dbReference type="PDB" id="6ACI"/>
    </source>
</evidence>
<feature type="chain" id="PRO_0000452591" description="Protein-arginine N-acetylglucosaminyltransferase NleB1">
    <location>
        <begin position="1"/>
        <end position="329"/>
    </location>
</feature>
<feature type="short sequence motif" description="DXD motif" evidence="19">
    <location>
        <begin position="221"/>
        <end position="223"/>
    </location>
</feature>
<feature type="active site" description="Proton acceptor" evidence="12">
    <location>
        <position position="253"/>
    </location>
</feature>
<feature type="binding site" evidence="20 22">
    <location>
        <begin position="48"/>
        <end position="50"/>
    </location>
    <ligand>
        <name>UDP-N-acetyl-alpha-D-glucosamine</name>
        <dbReference type="ChEBI" id="CHEBI:57705"/>
    </ligand>
</feature>
<feature type="binding site" evidence="20 22">
    <location>
        <position position="72"/>
    </location>
    <ligand>
        <name>UDP-N-acetyl-alpha-D-glucosamine</name>
        <dbReference type="ChEBI" id="CHEBI:57705"/>
    </ligand>
</feature>
<feature type="binding site" evidence="20 22">
    <location>
        <begin position="219"/>
        <end position="222"/>
    </location>
    <ligand>
        <name>UDP-N-acetyl-alpha-D-glucosamine</name>
        <dbReference type="ChEBI" id="CHEBI:57705"/>
    </ligand>
</feature>
<feature type="binding site" evidence="12 22">
    <location>
        <position position="223"/>
    </location>
    <ligand>
        <name>Mn(2+)</name>
        <dbReference type="ChEBI" id="CHEBI:29035"/>
    </ligand>
</feature>
<feature type="binding site" evidence="12 22">
    <location>
        <position position="320"/>
    </location>
    <ligand>
        <name>Mn(2+)</name>
        <dbReference type="ChEBI" id="CHEBI:29035"/>
    </ligand>
</feature>
<feature type="binding site" evidence="12 22">
    <location>
        <position position="322"/>
    </location>
    <ligand>
        <name>Mn(2+)</name>
        <dbReference type="ChEBI" id="CHEBI:29035"/>
    </ligand>
</feature>
<feature type="binding site" evidence="20 22">
    <location>
        <position position="322"/>
    </location>
    <ligand>
        <name>UDP-N-acetyl-alpha-D-glucosamine</name>
        <dbReference type="ChEBI" id="CHEBI:57705"/>
    </ligand>
</feature>
<feature type="binding site" evidence="20 22">
    <location>
        <begin position="327"/>
        <end position="329"/>
    </location>
    <ligand>
        <name>UDP-N-acetyl-alpha-D-glucosamine</name>
        <dbReference type="ChEBI" id="CHEBI:57705"/>
    </ligand>
</feature>
<feature type="glycosylation site" description="N-beta-linked (GlcNAc) arginine; by autocatalysis" evidence="14">
    <location>
        <position position="13"/>
    </location>
</feature>
<feature type="glycosylation site" description="N-beta-linked (GlcNAc) arginine; by autocatalysis" evidence="14">
    <location>
        <position position="53"/>
    </location>
</feature>
<feature type="glycosylation site" description="N-beta-linked (GlcNAc) arginine; by autocatalysis" evidence="14">
    <location>
        <position position="159"/>
    </location>
</feature>
<feature type="glycosylation site" description="N-beta-linked (GlcNAc) arginine; by autocatalysis" evidence="14">
    <location>
        <position position="293"/>
    </location>
</feature>
<feature type="mutagenesis site" description="In 4RA; abolished auto-GlcNAcylation and reduced activity toward death domain-containing host target proteins; when associated with A-53, A-159 and A-293." evidence="14">
    <original>R</original>
    <variation>A</variation>
    <location>
        <position position="13"/>
    </location>
</feature>
<feature type="mutagenesis site" description="Abolished protein-arginine N-acetylglucosaminyltransferase activity." evidence="12">
    <original>W</original>
    <variation>A</variation>
    <location>
        <position position="49"/>
    </location>
</feature>
<feature type="mutagenesis site" description="In 4RA; abolished auto-GlcNAcylation and reduced activity toward death domain-containing host target proteins; when associated with A-13, A-159 and A-293." evidence="14">
    <original>R</original>
    <variation>A</variation>
    <location>
        <position position="53"/>
    </location>
</feature>
<feature type="mutagenesis site" description="Does not affect ability to disrupt TNF signaling in infected cells." evidence="12">
    <original>E</original>
    <variation>A</variation>
    <location>
        <position position="58"/>
    </location>
</feature>
<feature type="mutagenesis site" description="Abolished protein-arginine N-acetylglucosaminyltransferase activity. Does not affect ability to interact with substrate host protein FADD." evidence="7">
    <original>PILN</original>
    <variation>AAAA</variation>
    <location>
        <begin position="63"/>
        <end position="66"/>
    </location>
</feature>
<feature type="mutagenesis site" description="Strongly decreased protein-arginine N-acetylglucosaminyltransferase activity; when associated with A-151." evidence="12">
    <original>Y</original>
    <variation>A</variation>
    <location>
        <position position="145"/>
    </location>
</feature>
<feature type="mutagenesis site" description="Strongly decreased protein-arginine N-acetylglucosaminyltransferase activity; when associated with A-145." evidence="12">
    <original>D</original>
    <variation>A</variation>
    <location>
        <position position="151"/>
    </location>
</feature>
<feature type="mutagenesis site" description="In 4RA; abolished auto-GlcNAcylation and reduced activity toward death domain-containing host target proteins; when associated with A-13, A-53 and A-293." evidence="14">
    <original>R</original>
    <variation>A</variation>
    <location>
        <position position="159"/>
    </location>
</feature>
<feature type="mutagenesis site" description="Does not affect protein-arginine N-acetylglucosaminyltransferase activity." evidence="12">
    <original>F</original>
    <variation>A</variation>
    <location>
        <position position="185"/>
    </location>
</feature>
<feature type="mutagenesis site" description="Abolished protein-arginine N-acetylglucosaminyltransferase activity." evidence="12">
    <original>D</original>
    <variation>A</variation>
    <location>
        <position position="186"/>
    </location>
</feature>
<feature type="mutagenesis site" description="Abolished protein-arginine N-acetylglucosaminyltransferase activity." evidence="12">
    <original>R</original>
    <variation>A</variation>
    <location>
        <position position="189"/>
    </location>
</feature>
<feature type="mutagenesis site" description="Abolished protein-arginine N-acetylglucosaminyltransferase activity. Does not affect ability to interact with substrate host protein FADD." evidence="7 12">
    <original>Y</original>
    <variation>A</variation>
    <location>
        <position position="219"/>
    </location>
</feature>
<feature type="mutagenesis site" description="Abolished protein-arginine N-acetylglucosaminyltransferase activity and ability to disrupt TNF signaling in infected cells. Does not affect ability to interact with substrate host protein FADD." evidence="5 6 7 10 11">
    <original>DAD</original>
    <variation>AAA</variation>
    <location>
        <begin position="221"/>
        <end position="223"/>
    </location>
</feature>
<feature type="mutagenesis site" description="Abolished protein-arginine N-acetylglucosaminyltransferase activity." evidence="12">
    <original>D</original>
    <variation>A</variation>
    <location>
        <position position="221"/>
    </location>
</feature>
<feature type="mutagenesis site" description="Abolished protein-arginine N-acetylglucosaminyltransferase activity." evidence="12">
    <original>D</original>
    <variation>A</variation>
    <location>
        <position position="223"/>
    </location>
</feature>
<feature type="mutagenesis site" description="Abolished interaction with substrate host protein FADD." evidence="7">
    <original>PDG</original>
    <variation>AAA</variation>
    <location>
        <begin position="236"/>
        <end position="238"/>
    </location>
</feature>
<feature type="mutagenesis site" description="Abolished protein-arginine N-acetylglucosaminyltransferase activity. Does not affect ability to interact with substrate host protein FADD." evidence="7 12">
    <original>E</original>
    <variation>A</variation>
    <location>
        <position position="253"/>
    </location>
</feature>
<feature type="mutagenesis site" description="Abolished protein-arginine N-acetylglucosaminyltransferase activity." evidence="12">
    <original>KVD</original>
    <variation>AVA</variation>
    <location>
        <begin position="277"/>
        <end position="279"/>
    </location>
</feature>
<feature type="mutagenesis site" description="Abolished protein-arginine N-acetylglucosaminyltransferase activity; when associated with 289-A--A-292." evidence="12">
    <original>K</original>
    <variation>A</variation>
    <location>
        <position position="277"/>
    </location>
</feature>
<feature type="mutagenesis site" description="Abolished protein-arginine N-acetylglucosaminyltransferase activity." evidence="12">
    <original>Y</original>
    <variation>A</variation>
    <location>
        <position position="283"/>
    </location>
</feature>
<feature type="mutagenesis site" description="Abolished protein-arginine N-acetylglucosaminyltransferase activity." evidence="12">
    <original>YD</original>
    <variation>AA</variation>
    <location>
        <begin position="284"/>
        <end position="285"/>
    </location>
</feature>
<feature type="mutagenesis site" description="Abolished protein-arginine N-acetylglucosaminyltransferase activity; when associated with A-277." evidence="12">
    <original>KGIK</original>
    <variation>AGIA</variation>
    <location>
        <begin position="289"/>
        <end position="292"/>
    </location>
</feature>
<feature type="mutagenesis site" description="In 4RA; abolished auto-GlcNAcylation and reduced activity toward death domain-containing host target proteins; when associated with A-13, A-53 and A-159." evidence="14">
    <original>R</original>
    <variation>A</variation>
    <location>
        <position position="293"/>
    </location>
</feature>
<feature type="strand" evidence="24">
    <location>
        <begin position="36"/>
        <end position="39"/>
    </location>
</feature>
<feature type="strand" evidence="24">
    <location>
        <begin position="45"/>
        <end position="50"/>
    </location>
</feature>
<feature type="helix" evidence="24">
    <location>
        <begin position="54"/>
        <end position="56"/>
    </location>
</feature>
<feature type="helix" evidence="24">
    <location>
        <begin position="72"/>
        <end position="82"/>
    </location>
</feature>
<feature type="strand" evidence="24">
    <location>
        <begin position="88"/>
        <end position="94"/>
    </location>
</feature>
<feature type="helix" evidence="24">
    <location>
        <begin position="98"/>
        <end position="110"/>
    </location>
</feature>
<feature type="strand" evidence="24">
    <location>
        <begin position="114"/>
        <end position="118"/>
    </location>
</feature>
<feature type="helix" evidence="24">
    <location>
        <begin position="119"/>
        <end position="121"/>
    </location>
</feature>
<feature type="helix" evidence="24">
    <location>
        <begin position="125"/>
        <end position="127"/>
    </location>
</feature>
<feature type="helix" evidence="24">
    <location>
        <begin position="131"/>
        <end position="144"/>
    </location>
</feature>
<feature type="helix" evidence="24">
    <location>
        <begin position="147"/>
        <end position="149"/>
    </location>
</feature>
<feature type="helix" evidence="24">
    <location>
        <begin position="152"/>
        <end position="163"/>
    </location>
</feature>
<feature type="helix" evidence="24">
    <location>
        <begin position="172"/>
        <end position="177"/>
    </location>
</feature>
<feature type="helix" evidence="24">
    <location>
        <begin position="182"/>
        <end position="195"/>
    </location>
</feature>
<feature type="helix" evidence="24">
    <location>
        <begin position="197"/>
        <end position="201"/>
    </location>
</feature>
<feature type="helix" evidence="24">
    <location>
        <begin position="208"/>
        <end position="210"/>
    </location>
</feature>
<feature type="strand" evidence="24">
    <location>
        <begin position="217"/>
        <end position="220"/>
    </location>
</feature>
<feature type="strand" evidence="24">
    <location>
        <begin position="232"/>
        <end position="236"/>
    </location>
</feature>
<feature type="strand" evidence="24">
    <location>
        <begin position="239"/>
        <end position="246"/>
    </location>
</feature>
<feature type="strand" evidence="24">
    <location>
        <begin position="249"/>
        <end position="261"/>
    </location>
</feature>
<feature type="helix" evidence="24">
    <location>
        <begin position="265"/>
        <end position="274"/>
    </location>
</feature>
<feature type="helix" evidence="24">
    <location>
        <begin position="282"/>
        <end position="287"/>
    </location>
</feature>
<feature type="helix" evidence="24">
    <location>
        <begin position="288"/>
        <end position="294"/>
    </location>
</feature>
<feature type="helix" evidence="24">
    <location>
        <begin position="303"/>
        <end position="310"/>
    </location>
</feature>
<feature type="helix" evidence="24">
    <location>
        <begin position="321"/>
        <end position="324"/>
    </location>
</feature>
<reference key="1">
    <citation type="journal article" date="2009" name="J. Bacteriol.">
        <title>Complete genome sequence and comparative genome analysis of enteropathogenic Escherichia coli O127:H6 strain E2348/69.</title>
        <authorList>
            <person name="Iguchi A."/>
            <person name="Thomson N.R."/>
            <person name="Ogura Y."/>
            <person name="Saunders D."/>
            <person name="Ooka T."/>
            <person name="Henderson I.R."/>
            <person name="Harris D."/>
            <person name="Asadulghani M."/>
            <person name="Kurokawa K."/>
            <person name="Dean P."/>
            <person name="Kenny B."/>
            <person name="Quail M.A."/>
            <person name="Thurston S."/>
            <person name="Dougan G."/>
            <person name="Hayashi T."/>
            <person name="Parkhill J."/>
            <person name="Frankel G."/>
        </authorList>
    </citation>
    <scope>NUCLEOTIDE SEQUENCE [LARGE SCALE GENOMIC DNA]</scope>
    <source>
        <strain>E2348/69 / EPEC</strain>
    </source>
</reference>
<reference key="2">
    <citation type="journal article" date="2010" name="PLoS Pathog.">
        <title>The type III secretion effector NleE inhibits NF-kappaB activation.</title>
        <authorList>
            <person name="Nadler C."/>
            <person name="Baruch K."/>
            <person name="Kobi S."/>
            <person name="Mills E."/>
            <person name="Haviv G."/>
            <person name="Farago M."/>
            <person name="Alkalay I."/>
            <person name="Bartfeld S."/>
            <person name="Meyer T.F."/>
            <person name="Ben-Neriah Y."/>
            <person name="Rosenshine I."/>
        </authorList>
    </citation>
    <scope>FUNCTION</scope>
    <source>
        <strain>E2348/69 / EPEC</strain>
    </source>
</reference>
<reference key="3">
    <citation type="journal article" date="2010" name="PLoS Pathog.">
        <title>The type III effectors NleE and NleB from enteropathogenic E. coli and OspZ from Shigella block nuclear translocation of NF-kappaB p65.</title>
        <authorList>
            <person name="Newton H.J."/>
            <person name="Pearson J.S."/>
            <person name="Badea L."/>
            <person name="Kelly M."/>
            <person name="Lucas M."/>
            <person name="Holloway G."/>
            <person name="Wagstaff K.M."/>
            <person name="Dunstone M.A."/>
            <person name="Sloan J."/>
            <person name="Whisstock J.C."/>
            <person name="Kaper J.B."/>
            <person name="Robins-Browne R.M."/>
            <person name="Jans D.A."/>
            <person name="Frankel G."/>
            <person name="Phillips A.D."/>
            <person name="Coulson B.S."/>
            <person name="Hartland E.L."/>
        </authorList>
    </citation>
    <scope>FUNCTION</scope>
    <source>
        <strain>E2348/69 / EPEC</strain>
    </source>
</reference>
<reference key="4">
    <citation type="journal article" date="2011" name="PLoS Pathog.">
        <title>The enteropathogenic E. coli (EPEC) Tir effector inhibits NF-kappaB activity by targeting TNFalpha receptor-associated factors.</title>
        <authorList>
            <person name="Ruchaud-Sparagano M.H."/>
            <person name="Muehlen S."/>
            <person name="Dean P."/>
            <person name="Kenny B."/>
        </authorList>
    </citation>
    <scope>FUNCTION</scope>
    <source>
        <strain>E2348/69 / EPEC</strain>
    </source>
</reference>
<reference key="5">
    <citation type="journal article" date="2013" name="Nature">
        <title>Pathogen blocks host death receptor signalling by arginine GlcNAcylation of death domains.</title>
        <authorList>
            <person name="Li S."/>
            <person name="Zhang L."/>
            <person name="Yao Q."/>
            <person name="Li L."/>
            <person name="Dong N."/>
            <person name="Rong J."/>
            <person name="Gao W."/>
            <person name="Ding X."/>
            <person name="Sun L."/>
            <person name="Chen X."/>
            <person name="Chen S."/>
            <person name="Shao F."/>
        </authorList>
    </citation>
    <scope>FUNCTION</scope>
    <scope>CATALYTIC ACTIVITY</scope>
    <scope>COFACTOR</scope>
    <scope>MUTAGENESIS OF 221-ASP--ASP-223</scope>
    <source>
        <strain>E2348/69 / EPEC</strain>
    </source>
</reference>
<reference key="6">
    <citation type="journal article" date="2013" name="Nature">
        <title>A type III effector antagonizes death receptor signalling during bacterial gut infection.</title>
        <authorList>
            <person name="Pearson J.S."/>
            <person name="Giogha C."/>
            <person name="Ong S.Y."/>
            <person name="Kennedy C.L."/>
            <person name="Kelly M."/>
            <person name="Robinson K.S."/>
            <person name="Lung T.W."/>
            <person name="Mansell A."/>
            <person name="Riedmaier P."/>
            <person name="Oates C.V."/>
            <person name="Zaid A."/>
            <person name="Muehlen S."/>
            <person name="Crepin V.F."/>
            <person name="Marches O."/>
            <person name="Ang C.S."/>
            <person name="Williamson N.A."/>
            <person name="O'Reilly L.A."/>
            <person name="Bankovacki A."/>
            <person name="Nachbur U."/>
            <person name="Infusini G."/>
            <person name="Webb A.I."/>
            <person name="Silke J."/>
            <person name="Strasser A."/>
            <person name="Frankel G."/>
            <person name="Hartland E.L."/>
        </authorList>
    </citation>
    <scope>FUNCTION</scope>
    <scope>CATALYTIC ACTIVITY</scope>
    <scope>COFACTOR</scope>
    <scope>MUTAGENESIS OF 221-ASP--ASP-223</scope>
    <source>
        <strain>E2348/69 / EPEC</strain>
    </source>
</reference>
<reference key="7">
    <citation type="journal article" date="2016" name="Infect. Immun.">
        <title>Mutagenesis and functional analysis of the bacterial arginine glycosyltransferase effector NleB1 from enteropathogenic Escherichia coli.</title>
        <authorList>
            <person name="Wong Fok Lung T."/>
            <person name="Giogha C."/>
            <person name="Creuzburg K."/>
            <person name="Ong S.Y."/>
            <person name="Pollock G.L."/>
            <person name="Zhang Y."/>
            <person name="Fung K.Y."/>
            <person name="Pearson J.S."/>
            <person name="Hartland E.L."/>
        </authorList>
    </citation>
    <scope>FUNCTION</scope>
    <scope>CATALYTIC ACTIVITY</scope>
    <scope>MUTAGENESIS OF 63-PRO--ASN-66; TYR-219; 221-ASP--ASP-223; 236-PRO--GLY-238 AND GLU-253</scope>
    <source>
        <strain>E2348/69 / EPEC</strain>
    </source>
</reference>
<reference key="8">
    <citation type="journal article" date="2017" name="Infect. Immun.">
        <title>Distinct Roles of the antiapoptotic effectors NleB and NleF from enteropathogenic Escherichia coli.</title>
        <authorList>
            <person name="Pollock G.L."/>
            <person name="Oates C.V.L."/>
            <person name="Giogha C."/>
            <person name="Wong Fok Lung T."/>
            <person name="Ong S.Y."/>
            <person name="Pearson J.S."/>
            <person name="Hartland E.L."/>
        </authorList>
    </citation>
    <scope>FUNCTION</scope>
    <source>
        <strain>E2348/69 / EPEC</strain>
    </source>
</reference>
<reference key="9">
    <citation type="journal article" date="2017" name="J. Biol. Chem.">
        <title>NleB/SseK effectors from Citrobacter rodentium, Escherichia coli, and Salmonella enterica display distinct differences in host substrate specificity.</title>
        <authorList>
            <person name="El Qaidi S."/>
            <person name="Chen K."/>
            <person name="Halim A."/>
            <person name="Siukstaite L."/>
            <person name="Rueter C."/>
            <person name="Hurtado-Guerrero R."/>
            <person name="Clausen H."/>
            <person name="Hardwidge P.R."/>
        </authorList>
    </citation>
    <scope>FUNCTION</scope>
    <source>
        <strain>E2348/69 / EPEC</strain>
    </source>
</reference>
<reference key="10">
    <citation type="journal article" date="2017" name="J. Biol. Chem.">
        <title>The bacterial arginine glycosyltransferase effector NleB preferentially modifies Fas-associated death domain protein (FADD).</title>
        <authorList>
            <person name="Scott N.E."/>
            <person name="Giogha C."/>
            <person name="Pollock G.L."/>
            <person name="Kennedy C.L."/>
            <person name="Webb A.I."/>
            <person name="Williamson N.A."/>
            <person name="Pearson J.S."/>
            <person name="Hartland E.L."/>
        </authorList>
    </citation>
    <scope>FUNCTION</scope>
    <scope>CATALYTIC ACTIVITY</scope>
    <scope>MUTAGENESIS OF 221-ASP--ASP-223</scope>
    <source>
        <strain>E2348/69 / EPEC</strain>
    </source>
</reference>
<reference key="11">
    <citation type="journal article" date="2018" name="PLoS Pathog.">
        <title>A pathogen-derived effector modulates host glucose metabolism by arginine GlcNAcylation of HIF-1alpha protein.</title>
        <authorList>
            <person name="Xu C."/>
            <person name="Liu X."/>
            <person name="Zha H."/>
            <person name="Fan S."/>
            <person name="Zhang D."/>
            <person name="Li S."/>
            <person name="Xiao W."/>
        </authorList>
    </citation>
    <scope>FUNCTION</scope>
    <scope>CATALYTIC ACTIVITY</scope>
    <scope>MUTAGENESIS OF 221-ASP--ASP-223</scope>
    <source>
        <strain>E2348/69 / EPEC</strain>
    </source>
</reference>
<reference key="12">
    <citation type="journal article" date="2020" name="Front. Cell. Infect. Microbiol.">
        <title>Auto arginine-GlcNAcylation is crucial for bacterial pathogens in regulating host cell death.</title>
        <authorList>
            <person name="Xue J."/>
            <person name="Pan X."/>
            <person name="Peng T."/>
            <person name="Duan M."/>
            <person name="Du L."/>
            <person name="Zhuang X."/>
            <person name="Cai X."/>
            <person name="Yi X."/>
            <person name="Fu Y."/>
            <person name="Li S."/>
        </authorList>
    </citation>
    <scope>FUNCTION</scope>
    <scope>CATALYTIC ACTIVITY</scope>
    <scope>SUBCELLULAR LOCATION</scope>
    <scope>AUTOGLYCOSYLATION</scope>
    <scope>GLYCOSYLATION AT ARG-13; ARG-53; ARG-159 AND ARG-293</scope>
    <scope>MUTAGENESIS OF ARG-13; ARG-53; ARG-159 AND ARG-293</scope>
    <source>
        <strain>E2348/69 / EPEC</strain>
    </source>
</reference>
<reference key="13">
    <citation type="journal article" date="2020" name="Sci. Rep.">
        <title>An intra-bacterial activity for a T3SS effector.</title>
        <authorList>
            <person name="El Qaidi S."/>
            <person name="Scott N.E."/>
            <person name="Hays M.P."/>
            <person name="Geisbrecht B.V."/>
            <person name="Watkins S."/>
            <person name="Hardwidge P.R."/>
        </authorList>
    </citation>
    <scope>FUNCTION</scope>
</reference>
<reference evidence="22 23" key="14">
    <citation type="journal article" date="2019" name="Mol. Cell">
        <title>Structural and functional insights into host death domains inactivation by the bacterial arginine GlcNAcyltransferase effector.</title>
        <authorList>
            <person name="Ding J."/>
            <person name="Pan X."/>
            <person name="Du L."/>
            <person name="Yao Q."/>
            <person name="Xue J."/>
            <person name="Yao H."/>
            <person name="Wang D.C."/>
            <person name="Li S."/>
            <person name="Shao F."/>
        </authorList>
    </citation>
    <scope>X-RAY CRYSTALLOGRAPHY (1.87 ANGSTROMS) OF 28-329 IN COMPLEX WITH URIDINE-5'-DIPHOSPHATE; MANGANESE AND HOST FADD</scope>
    <scope>FUNCTION</scope>
    <scope>CATALYTIC ACTIVITY</scope>
    <scope>COFACTOR</scope>
    <scope>ACTIVE SITE</scope>
    <scope>DOMAIN</scope>
    <scope>MUTAGENESIS OF TRP-49; GLU-58; TYR-145; ASP-151; PHE-185; ASP-186; ARG-189; TYR-219; ASP-221; ASP-223; GLU-253; 277-LYS--ASP-279; LYS-277; TYR-283; 284-TYR-ASP-285 AND 289-LYS--LYS-292</scope>
</reference>
<organism>
    <name type="scientific">Escherichia coli O127:H6 (strain E2348/69 / EPEC)</name>
    <dbReference type="NCBI Taxonomy" id="574521"/>
    <lineage>
        <taxon>Bacteria</taxon>
        <taxon>Pseudomonadati</taxon>
        <taxon>Pseudomonadota</taxon>
        <taxon>Gammaproteobacteria</taxon>
        <taxon>Enterobacterales</taxon>
        <taxon>Enterobacteriaceae</taxon>
        <taxon>Escherichia</taxon>
    </lineage>
</organism>
<protein>
    <recommendedName>
        <fullName evidence="19">Protein-arginine N-acetylglucosaminyltransferase NleB1</fullName>
        <shortName evidence="17">Arginine GlcNAcyltransferase NleB1</shortName>
        <ecNumber evidence="5 6 7 10 11 12 14">2.4.1.-</ecNumber>
    </recommendedName>
    <alternativeName>
        <fullName evidence="15">Non-LEE-encoded type III effector B1</fullName>
    </alternativeName>
</protein>
<gene>
    <name evidence="15" type="primary">nleB1</name>
    <name evidence="16 18" type="synonym">nleB</name>
    <name evidence="21" type="ordered locus">E2348C_3231</name>
</gene>
<comment type="function">
    <text evidence="2 3 4 5 6 7 8 9 10 11 12 13 14">Protein-arginine N-acetylglucosaminyltransferase effector that disrupts TNF signaling in infected cells, including NF-kappa-B signaling, apoptosis and necroptosis (PubMed:20126447, PubMed:20485572, PubMed:22144899, PubMed:23955153, PubMed:24025841, PubMed:28138023, PubMed:28522607, PubMed:30979585). Acts by catalyzing the transfer of a single N-acetylglucosamine (GlcNAc) to a conserved arginine residue in the death domain of host proteins FADD, TRADD, FAS, TNFRSF1A/TNFR1, TNFRSF25/DR3 and RIPK1: arginine GlcNAcylation prevents homotypic/heterotypic death domain interactions and assembly of the oligomeric TNF-alpha receptor complex, thereby disrupting TNF signaling (PubMed:23955153, PubMed:24025841, PubMed:26883593, PubMed:28522607, PubMed:28860194, PubMed:30979585). Has preference for host FADD as substrate compared to other death domain-containing proteins (PubMed:28860194). Also acts on host proteins without a death domain: catalyzes arginine GlcNAcylation of HIF1A, thereby regulating host glucose metabolism (PubMed:30125331). Also displays intra-bacterial activity by mediating GlcNAcylation of glutathione synthetase GshB (PubMed:31974499). Catalyzes auto-GlcNAcylation, which is required for activity toward death domain-containing host target proteins (PubMed:32432056). Shows a higher enzymatic activity than NleB2 (PubMed:23955153).</text>
</comment>
<comment type="catalytic activity">
    <reaction evidence="5 6 7 10 11 12 14">
        <text>L-arginyl-[protein] + UDP-N-acetyl-alpha-D-glucosamine = N(omega)-(N-acetyl-beta-D-glucosaminyl)-L-arginyl-[protein] + UDP + H(+)</text>
        <dbReference type="Rhea" id="RHEA:66632"/>
        <dbReference type="Rhea" id="RHEA-COMP:10532"/>
        <dbReference type="Rhea" id="RHEA-COMP:17079"/>
        <dbReference type="ChEBI" id="CHEBI:15378"/>
        <dbReference type="ChEBI" id="CHEBI:29965"/>
        <dbReference type="ChEBI" id="CHEBI:57705"/>
        <dbReference type="ChEBI" id="CHEBI:58223"/>
        <dbReference type="ChEBI" id="CHEBI:167322"/>
    </reaction>
    <physiologicalReaction direction="left-to-right" evidence="5 6 7 10 11 12 14">
        <dbReference type="Rhea" id="RHEA:66633"/>
    </physiologicalReaction>
</comment>
<comment type="cofactor">
    <cofactor evidence="5 6 12">
        <name>Mn(2+)</name>
        <dbReference type="ChEBI" id="CHEBI:29035"/>
    </cofactor>
</comment>
<comment type="interaction">
    <interactant intactId="EBI-16070376">
        <id>B7UI21</id>
    </interactant>
    <interactant intactId="EBI-494804">
        <id>Q13158</id>
        <label>FADD</label>
    </interactant>
    <organismsDiffer>true</organismsDiffer>
    <experiments>7</experiments>
</comment>
<comment type="interaction">
    <interactant intactId="EBI-16070376">
        <id>B7UI21</id>
    </interactant>
    <interactant intactId="EBI-358507">
        <id>Q13546</id>
        <label>RIPK1</label>
    </interactant>
    <organismsDiffer>true</organismsDiffer>
    <experiments>4</experiments>
</comment>
<comment type="interaction">
    <interactant intactId="EBI-16070376">
        <id>B7UI21</id>
    </interactant>
    <interactant intactId="EBI-359215">
        <id>Q15628</id>
        <label>TRADD</label>
    </interactant>
    <organismsDiffer>true</organismsDiffer>
    <experiments>7</experiments>
</comment>
<comment type="subcellular location">
    <subcellularLocation>
        <location evidence="1">Secreted</location>
    </subcellularLocation>
    <subcellularLocation>
        <location evidence="14">Host cytoplasm</location>
    </subcellularLocation>
    <text evidence="1">Secreted via the type III secretion system (T3SS).</text>
</comment>
<comment type="domain">
    <text evidence="12">Adopts a GT-A fold and acts as an inverting enzyme that converts the alpha-configuration in the UDP-N-acetyl-alpha-D-glucosamine donor to the beta configuration in the N-linked (GlcNAc) arginine product.</text>
</comment>
<comment type="PTM">
    <text evidence="14">Auto-glycosylated: arginine GlcNAcylation is required for activity toward death domain-containing host target proteins.</text>
</comment>
<comment type="similarity">
    <text evidence="19">Belongs to the glycosyltransferase NleB family.</text>
</comment>
<accession>B7UI21</accession>